<organism>
    <name type="scientific">Azoarcus sp. (strain BH72)</name>
    <dbReference type="NCBI Taxonomy" id="418699"/>
    <lineage>
        <taxon>Bacteria</taxon>
        <taxon>Pseudomonadati</taxon>
        <taxon>Pseudomonadota</taxon>
        <taxon>Betaproteobacteria</taxon>
        <taxon>Rhodocyclales</taxon>
        <taxon>Zoogloeaceae</taxon>
        <taxon>Azoarcus</taxon>
    </lineage>
</organism>
<dbReference type="EC" id="3.5.4.19" evidence="1"/>
<dbReference type="EMBL" id="AM406670">
    <property type="protein sequence ID" value="CAL95959.1"/>
    <property type="molecule type" value="Genomic_DNA"/>
</dbReference>
<dbReference type="RefSeq" id="WP_011767066.1">
    <property type="nucleotide sequence ID" value="NC_008702.1"/>
</dbReference>
<dbReference type="SMR" id="A1KAV3"/>
<dbReference type="STRING" id="62928.azo3343"/>
<dbReference type="KEGG" id="aoa:dqs_3480"/>
<dbReference type="KEGG" id="azo:azo3343"/>
<dbReference type="eggNOG" id="COG0139">
    <property type="taxonomic scope" value="Bacteria"/>
</dbReference>
<dbReference type="HOGENOM" id="CLU_048577_5_0_4"/>
<dbReference type="OrthoDB" id="9795769at2"/>
<dbReference type="UniPathway" id="UPA00031">
    <property type="reaction ID" value="UER00008"/>
</dbReference>
<dbReference type="Proteomes" id="UP000002588">
    <property type="component" value="Chromosome"/>
</dbReference>
<dbReference type="GO" id="GO:0005737">
    <property type="term" value="C:cytoplasm"/>
    <property type="evidence" value="ECO:0007669"/>
    <property type="project" value="UniProtKB-SubCell"/>
</dbReference>
<dbReference type="GO" id="GO:0000287">
    <property type="term" value="F:magnesium ion binding"/>
    <property type="evidence" value="ECO:0007669"/>
    <property type="project" value="UniProtKB-UniRule"/>
</dbReference>
<dbReference type="GO" id="GO:0004635">
    <property type="term" value="F:phosphoribosyl-AMP cyclohydrolase activity"/>
    <property type="evidence" value="ECO:0007669"/>
    <property type="project" value="UniProtKB-UniRule"/>
</dbReference>
<dbReference type="GO" id="GO:0008270">
    <property type="term" value="F:zinc ion binding"/>
    <property type="evidence" value="ECO:0007669"/>
    <property type="project" value="UniProtKB-UniRule"/>
</dbReference>
<dbReference type="GO" id="GO:0000105">
    <property type="term" value="P:L-histidine biosynthetic process"/>
    <property type="evidence" value="ECO:0007669"/>
    <property type="project" value="UniProtKB-UniRule"/>
</dbReference>
<dbReference type="FunFam" id="3.10.20.810:FF:000001">
    <property type="entry name" value="Histidine biosynthesis bifunctional protein HisIE"/>
    <property type="match status" value="1"/>
</dbReference>
<dbReference type="Gene3D" id="3.10.20.810">
    <property type="entry name" value="Phosphoribosyl-AMP cyclohydrolase"/>
    <property type="match status" value="1"/>
</dbReference>
<dbReference type="HAMAP" id="MF_01021">
    <property type="entry name" value="HisI"/>
    <property type="match status" value="1"/>
</dbReference>
<dbReference type="InterPro" id="IPR026660">
    <property type="entry name" value="PRA-CH"/>
</dbReference>
<dbReference type="InterPro" id="IPR002496">
    <property type="entry name" value="PRib_AMP_CycHydrolase_dom"/>
</dbReference>
<dbReference type="InterPro" id="IPR038019">
    <property type="entry name" value="PRib_AMP_CycHydrolase_sf"/>
</dbReference>
<dbReference type="NCBIfam" id="NF000768">
    <property type="entry name" value="PRK00051.1"/>
    <property type="match status" value="1"/>
</dbReference>
<dbReference type="PANTHER" id="PTHR42945">
    <property type="entry name" value="HISTIDINE BIOSYNTHESIS BIFUNCTIONAL PROTEIN"/>
    <property type="match status" value="1"/>
</dbReference>
<dbReference type="PANTHER" id="PTHR42945:SF1">
    <property type="entry name" value="HISTIDINE BIOSYNTHESIS BIFUNCTIONAL PROTEIN HIS7"/>
    <property type="match status" value="1"/>
</dbReference>
<dbReference type="Pfam" id="PF01502">
    <property type="entry name" value="PRA-CH"/>
    <property type="match status" value="1"/>
</dbReference>
<dbReference type="SUPFAM" id="SSF141734">
    <property type="entry name" value="HisI-like"/>
    <property type="match status" value="1"/>
</dbReference>
<reference key="1">
    <citation type="journal article" date="2006" name="Nat. Biotechnol.">
        <title>Complete genome of the mutualistic, N2-fixing grass endophyte Azoarcus sp. strain BH72.</title>
        <authorList>
            <person name="Krause A."/>
            <person name="Ramakumar A."/>
            <person name="Bartels D."/>
            <person name="Battistoni F."/>
            <person name="Bekel T."/>
            <person name="Boch J."/>
            <person name="Boehm M."/>
            <person name="Friedrich F."/>
            <person name="Hurek T."/>
            <person name="Krause L."/>
            <person name="Linke B."/>
            <person name="McHardy A.C."/>
            <person name="Sarkar A."/>
            <person name="Schneiker S."/>
            <person name="Syed A.A."/>
            <person name="Thauer R."/>
            <person name="Vorhoelter F.-J."/>
            <person name="Weidner S."/>
            <person name="Puehler A."/>
            <person name="Reinhold-Hurek B."/>
            <person name="Kaiser O."/>
            <person name="Goesmann A."/>
        </authorList>
    </citation>
    <scope>NUCLEOTIDE SEQUENCE [LARGE SCALE GENOMIC DNA]</scope>
    <source>
        <strain>BH72</strain>
    </source>
</reference>
<sequence>MSTSTKWLNEVKWDENGLVPVIAQEASTGDVLMFAWMNREALQRTAETGNAIYWSRSRRKLWHKGEESGHVQKVVELRIDCDNDVVLMKVEQVGGIACHTGRHSCFFQKYLADGRWETVEPVLKDPKDIYS</sequence>
<proteinExistence type="inferred from homology"/>
<comment type="function">
    <text evidence="1">Catalyzes the hydrolysis of the adenine ring of phosphoribosyl-AMP.</text>
</comment>
<comment type="catalytic activity">
    <reaction evidence="1">
        <text>1-(5-phospho-beta-D-ribosyl)-5'-AMP + H2O = 1-(5-phospho-beta-D-ribosyl)-5-[(5-phospho-beta-D-ribosylamino)methylideneamino]imidazole-4-carboxamide</text>
        <dbReference type="Rhea" id="RHEA:20049"/>
        <dbReference type="ChEBI" id="CHEBI:15377"/>
        <dbReference type="ChEBI" id="CHEBI:58435"/>
        <dbReference type="ChEBI" id="CHEBI:59457"/>
        <dbReference type="EC" id="3.5.4.19"/>
    </reaction>
</comment>
<comment type="cofactor">
    <cofactor evidence="1">
        <name>Mg(2+)</name>
        <dbReference type="ChEBI" id="CHEBI:18420"/>
    </cofactor>
    <text evidence="1">Binds 1 Mg(2+) ion per subunit.</text>
</comment>
<comment type="cofactor">
    <cofactor evidence="1">
        <name>Zn(2+)</name>
        <dbReference type="ChEBI" id="CHEBI:29105"/>
    </cofactor>
    <text evidence="1">Binds 1 zinc ion per subunit.</text>
</comment>
<comment type="pathway">
    <text evidence="1">Amino-acid biosynthesis; L-histidine biosynthesis; L-histidine from 5-phospho-alpha-D-ribose 1-diphosphate: step 3/9.</text>
</comment>
<comment type="subunit">
    <text evidence="1">Homodimer.</text>
</comment>
<comment type="subcellular location">
    <subcellularLocation>
        <location evidence="1">Cytoplasm</location>
    </subcellularLocation>
</comment>
<comment type="similarity">
    <text evidence="1">Belongs to the PRA-CH family.</text>
</comment>
<keyword id="KW-0028">Amino-acid biosynthesis</keyword>
<keyword id="KW-0963">Cytoplasm</keyword>
<keyword id="KW-0368">Histidine biosynthesis</keyword>
<keyword id="KW-0378">Hydrolase</keyword>
<keyword id="KW-0460">Magnesium</keyword>
<keyword id="KW-0479">Metal-binding</keyword>
<keyword id="KW-1185">Reference proteome</keyword>
<keyword id="KW-0862">Zinc</keyword>
<feature type="chain" id="PRO_0000319682" description="Phosphoribosyl-AMP cyclohydrolase">
    <location>
        <begin position="1"/>
        <end position="131"/>
    </location>
</feature>
<feature type="binding site" evidence="1">
    <location>
        <position position="80"/>
    </location>
    <ligand>
        <name>Mg(2+)</name>
        <dbReference type="ChEBI" id="CHEBI:18420"/>
    </ligand>
</feature>
<feature type="binding site" evidence="1">
    <location>
        <position position="81"/>
    </location>
    <ligand>
        <name>Zn(2+)</name>
        <dbReference type="ChEBI" id="CHEBI:29105"/>
        <note>ligand shared between dimeric partners</note>
    </ligand>
</feature>
<feature type="binding site" evidence="1">
    <location>
        <position position="82"/>
    </location>
    <ligand>
        <name>Mg(2+)</name>
        <dbReference type="ChEBI" id="CHEBI:18420"/>
    </ligand>
</feature>
<feature type="binding site" evidence="1">
    <location>
        <position position="84"/>
    </location>
    <ligand>
        <name>Mg(2+)</name>
        <dbReference type="ChEBI" id="CHEBI:18420"/>
    </ligand>
</feature>
<feature type="binding site" evidence="1">
    <location>
        <position position="98"/>
    </location>
    <ligand>
        <name>Zn(2+)</name>
        <dbReference type="ChEBI" id="CHEBI:29105"/>
        <note>ligand shared between dimeric partners</note>
    </ligand>
</feature>
<feature type="binding site" evidence="1">
    <location>
        <position position="105"/>
    </location>
    <ligand>
        <name>Zn(2+)</name>
        <dbReference type="ChEBI" id="CHEBI:29105"/>
        <note>ligand shared between dimeric partners</note>
    </ligand>
</feature>
<gene>
    <name evidence="1" type="primary">hisI</name>
    <name type="ordered locus">azo3343</name>
</gene>
<name>HIS3_AZOSB</name>
<protein>
    <recommendedName>
        <fullName evidence="1">Phosphoribosyl-AMP cyclohydrolase</fullName>
        <shortName evidence="1">PRA-CH</shortName>
        <ecNumber evidence="1">3.5.4.19</ecNumber>
    </recommendedName>
</protein>
<accession>A1KAV3</accession>
<evidence type="ECO:0000255" key="1">
    <source>
        <dbReference type="HAMAP-Rule" id="MF_01021"/>
    </source>
</evidence>